<comment type="function">
    <text evidence="1">Catalyzes the condensation of (S)-aspartate-beta-semialdehyde [(S)-ASA] and pyruvate to 4-hydroxy-tetrahydrodipicolinate (HTPA).</text>
</comment>
<comment type="catalytic activity">
    <reaction evidence="1">
        <text>L-aspartate 4-semialdehyde + pyruvate = (2S,4S)-4-hydroxy-2,3,4,5-tetrahydrodipicolinate + H2O + H(+)</text>
        <dbReference type="Rhea" id="RHEA:34171"/>
        <dbReference type="ChEBI" id="CHEBI:15361"/>
        <dbReference type="ChEBI" id="CHEBI:15377"/>
        <dbReference type="ChEBI" id="CHEBI:15378"/>
        <dbReference type="ChEBI" id="CHEBI:67139"/>
        <dbReference type="ChEBI" id="CHEBI:537519"/>
        <dbReference type="EC" id="4.3.3.7"/>
    </reaction>
</comment>
<comment type="pathway">
    <text evidence="1">Amino-acid biosynthesis; L-lysine biosynthesis via DAP pathway; (S)-tetrahydrodipicolinate from L-aspartate: step 3/4.</text>
</comment>
<comment type="subunit">
    <text evidence="1">Homotetramer; dimer of dimers.</text>
</comment>
<comment type="subcellular location">
    <subcellularLocation>
        <location evidence="1">Cytoplasm</location>
    </subcellularLocation>
</comment>
<comment type="similarity">
    <text evidence="1">Belongs to the DapA family.</text>
</comment>
<comment type="caution">
    <text evidence="2">Was originally thought to be a dihydrodipicolinate synthase (DHDPS), catalyzing the condensation of (S)-aspartate-beta-semialdehyde [(S)-ASA] and pyruvate to dihydrodipicolinate (DHDP). However, it was shown in E.coli that the product of the enzymatic reaction is not dihydrodipicolinate but in fact (4S)-4-hydroxy-2,3,4,5-tetrahydro-(2S)-dipicolinic acid (HTPA), and that the consecutive dehydration reaction leading to DHDP is not spontaneous but catalyzed by DapB.</text>
</comment>
<name>DAPA_CHLPD</name>
<accession>A1BE04</accession>
<feature type="chain" id="PRO_1000050175" description="4-hydroxy-tetrahydrodipicolinate synthase">
    <location>
        <begin position="1"/>
        <end position="296"/>
    </location>
</feature>
<feature type="active site" description="Proton donor/acceptor" evidence="1">
    <location>
        <position position="137"/>
    </location>
</feature>
<feature type="active site" description="Schiff-base intermediate with substrate" evidence="1">
    <location>
        <position position="166"/>
    </location>
</feature>
<feature type="binding site" evidence="1">
    <location>
        <position position="49"/>
    </location>
    <ligand>
        <name>pyruvate</name>
        <dbReference type="ChEBI" id="CHEBI:15361"/>
    </ligand>
</feature>
<feature type="binding site" evidence="1">
    <location>
        <position position="208"/>
    </location>
    <ligand>
        <name>pyruvate</name>
        <dbReference type="ChEBI" id="CHEBI:15361"/>
    </ligand>
</feature>
<feature type="site" description="Part of a proton relay during catalysis" evidence="1">
    <location>
        <position position="48"/>
    </location>
</feature>
<feature type="site" description="Part of a proton relay during catalysis" evidence="1">
    <location>
        <position position="111"/>
    </location>
</feature>
<sequence>MSTRYIAGSAVALVTPFRKNNTIDTDALKKLVQFHIEAGTDIIIPCGTTGESPTLTSDEQFRIIRIVSEEADGKIMVAAGAGTNATAHAVELAKNAEKAGASAILSVAPYYNKPSQEGFYQHFRHIAEAVSVPIIVYNVPGRTGSNLSASTILRLARDFANIAAVKEASDNMNQIMELLEERPENFSVMTGEDMLILPFMAMGGDGVISVAANQIPSTVKQLVIAAKQGNLDEARALNRKYRRLFKMNFIESNPVPVKYCLSLMGMIEENYRLPLVPLSDENKAVLKKEMEFLGLI</sequence>
<keyword id="KW-0028">Amino-acid biosynthesis</keyword>
<keyword id="KW-0963">Cytoplasm</keyword>
<keyword id="KW-0220">Diaminopimelate biosynthesis</keyword>
<keyword id="KW-0456">Lyase</keyword>
<keyword id="KW-0457">Lysine biosynthesis</keyword>
<keyword id="KW-1185">Reference proteome</keyword>
<keyword id="KW-0704">Schiff base</keyword>
<reference key="1">
    <citation type="submission" date="2006-12" db="EMBL/GenBank/DDBJ databases">
        <title>Complete sequence of Chlorobium phaeobacteroides DSM 266.</title>
        <authorList>
            <consortium name="US DOE Joint Genome Institute"/>
            <person name="Copeland A."/>
            <person name="Lucas S."/>
            <person name="Lapidus A."/>
            <person name="Barry K."/>
            <person name="Detter J.C."/>
            <person name="Glavina del Rio T."/>
            <person name="Hammon N."/>
            <person name="Israni S."/>
            <person name="Pitluck S."/>
            <person name="Goltsman E."/>
            <person name="Schmutz J."/>
            <person name="Larimer F."/>
            <person name="Land M."/>
            <person name="Hauser L."/>
            <person name="Mikhailova N."/>
            <person name="Li T."/>
            <person name="Overmann J."/>
            <person name="Bryant D.A."/>
            <person name="Richardson P."/>
        </authorList>
    </citation>
    <scope>NUCLEOTIDE SEQUENCE [LARGE SCALE GENOMIC DNA]</scope>
    <source>
        <strain>DSM 266 / SMG 266 / 2430</strain>
    </source>
</reference>
<dbReference type="EC" id="4.3.3.7" evidence="1"/>
<dbReference type="EMBL" id="CP000492">
    <property type="protein sequence ID" value="ABL64631.1"/>
    <property type="molecule type" value="Genomic_DNA"/>
</dbReference>
<dbReference type="RefSeq" id="WP_011744464.1">
    <property type="nucleotide sequence ID" value="NC_008639.1"/>
</dbReference>
<dbReference type="SMR" id="A1BE04"/>
<dbReference type="STRING" id="290317.Cpha266_0575"/>
<dbReference type="KEGG" id="cph:Cpha266_0575"/>
<dbReference type="eggNOG" id="COG0329">
    <property type="taxonomic scope" value="Bacteria"/>
</dbReference>
<dbReference type="HOGENOM" id="CLU_049343_7_0_10"/>
<dbReference type="OrthoDB" id="9782828at2"/>
<dbReference type="UniPathway" id="UPA00034">
    <property type="reaction ID" value="UER00017"/>
</dbReference>
<dbReference type="Proteomes" id="UP000008701">
    <property type="component" value="Chromosome"/>
</dbReference>
<dbReference type="GO" id="GO:0005829">
    <property type="term" value="C:cytosol"/>
    <property type="evidence" value="ECO:0007669"/>
    <property type="project" value="TreeGrafter"/>
</dbReference>
<dbReference type="GO" id="GO:0008840">
    <property type="term" value="F:4-hydroxy-tetrahydrodipicolinate synthase activity"/>
    <property type="evidence" value="ECO:0007669"/>
    <property type="project" value="UniProtKB-UniRule"/>
</dbReference>
<dbReference type="GO" id="GO:0019877">
    <property type="term" value="P:diaminopimelate biosynthetic process"/>
    <property type="evidence" value="ECO:0007669"/>
    <property type="project" value="UniProtKB-UniRule"/>
</dbReference>
<dbReference type="GO" id="GO:0009089">
    <property type="term" value="P:lysine biosynthetic process via diaminopimelate"/>
    <property type="evidence" value="ECO:0007669"/>
    <property type="project" value="UniProtKB-UniRule"/>
</dbReference>
<dbReference type="CDD" id="cd00950">
    <property type="entry name" value="DHDPS"/>
    <property type="match status" value="1"/>
</dbReference>
<dbReference type="Gene3D" id="3.20.20.70">
    <property type="entry name" value="Aldolase class I"/>
    <property type="match status" value="1"/>
</dbReference>
<dbReference type="HAMAP" id="MF_00418">
    <property type="entry name" value="DapA"/>
    <property type="match status" value="1"/>
</dbReference>
<dbReference type="InterPro" id="IPR013785">
    <property type="entry name" value="Aldolase_TIM"/>
</dbReference>
<dbReference type="InterPro" id="IPR005263">
    <property type="entry name" value="DapA"/>
</dbReference>
<dbReference type="InterPro" id="IPR002220">
    <property type="entry name" value="DapA-like"/>
</dbReference>
<dbReference type="InterPro" id="IPR020625">
    <property type="entry name" value="Schiff_base-form_aldolases_AS"/>
</dbReference>
<dbReference type="NCBIfam" id="TIGR00674">
    <property type="entry name" value="dapA"/>
    <property type="match status" value="1"/>
</dbReference>
<dbReference type="PANTHER" id="PTHR12128:SF66">
    <property type="entry name" value="4-HYDROXY-2-OXOGLUTARATE ALDOLASE, MITOCHONDRIAL"/>
    <property type="match status" value="1"/>
</dbReference>
<dbReference type="PANTHER" id="PTHR12128">
    <property type="entry name" value="DIHYDRODIPICOLINATE SYNTHASE"/>
    <property type="match status" value="1"/>
</dbReference>
<dbReference type="Pfam" id="PF00701">
    <property type="entry name" value="DHDPS"/>
    <property type="match status" value="1"/>
</dbReference>
<dbReference type="PIRSF" id="PIRSF001365">
    <property type="entry name" value="DHDPS"/>
    <property type="match status" value="1"/>
</dbReference>
<dbReference type="PRINTS" id="PR00146">
    <property type="entry name" value="DHPICSNTHASE"/>
</dbReference>
<dbReference type="SMART" id="SM01130">
    <property type="entry name" value="DHDPS"/>
    <property type="match status" value="1"/>
</dbReference>
<dbReference type="SUPFAM" id="SSF51569">
    <property type="entry name" value="Aldolase"/>
    <property type="match status" value="1"/>
</dbReference>
<dbReference type="PROSITE" id="PS00666">
    <property type="entry name" value="DHDPS_2"/>
    <property type="match status" value="1"/>
</dbReference>
<organism>
    <name type="scientific">Chlorobium phaeobacteroides (strain DSM 266 / SMG 266 / 2430)</name>
    <dbReference type="NCBI Taxonomy" id="290317"/>
    <lineage>
        <taxon>Bacteria</taxon>
        <taxon>Pseudomonadati</taxon>
        <taxon>Chlorobiota</taxon>
        <taxon>Chlorobiia</taxon>
        <taxon>Chlorobiales</taxon>
        <taxon>Chlorobiaceae</taxon>
        <taxon>Chlorobium/Pelodictyon group</taxon>
        <taxon>Chlorobium</taxon>
    </lineage>
</organism>
<proteinExistence type="inferred from homology"/>
<protein>
    <recommendedName>
        <fullName evidence="1">4-hydroxy-tetrahydrodipicolinate synthase</fullName>
        <shortName evidence="1">HTPA synthase</shortName>
        <ecNumber evidence="1">4.3.3.7</ecNumber>
    </recommendedName>
</protein>
<evidence type="ECO:0000255" key="1">
    <source>
        <dbReference type="HAMAP-Rule" id="MF_00418"/>
    </source>
</evidence>
<evidence type="ECO:0000305" key="2"/>
<gene>
    <name evidence="1" type="primary">dapA</name>
    <name type="ordered locus">Cpha266_0575</name>
</gene>